<keyword id="KW-0479">Metal-binding</keyword>
<keyword id="KW-0539">Nucleus</keyword>
<keyword id="KW-1185">Reference proteome</keyword>
<keyword id="KW-0687">Ribonucleoprotein</keyword>
<keyword id="KW-0694">RNA-binding</keyword>
<keyword id="KW-0862">Zinc</keyword>
<keyword id="KW-0863">Zinc-finger</keyword>
<accession>A7EYK3</accession>
<dbReference type="EMBL" id="CH476635">
    <property type="protein sequence ID" value="EDN94545.1"/>
    <property type="molecule type" value="Genomic_DNA"/>
</dbReference>
<dbReference type="RefSeq" id="XP_001588871.1">
    <property type="nucleotide sequence ID" value="XM_001588821.1"/>
</dbReference>
<dbReference type="SMR" id="A7EYK3"/>
<dbReference type="STRING" id="665079.A7EYK3"/>
<dbReference type="EnsemblFungi" id="EDN94545">
    <property type="protein sequence ID" value="EDN94545"/>
    <property type="gene ID" value="SS1G_10419"/>
</dbReference>
<dbReference type="GeneID" id="5484868"/>
<dbReference type="KEGG" id="ssl:SS1G_10419"/>
<dbReference type="eggNOG" id="KOG3454">
    <property type="taxonomic scope" value="Eukaryota"/>
</dbReference>
<dbReference type="HOGENOM" id="CLU_079697_2_0_1"/>
<dbReference type="InParanoid" id="A7EYK3"/>
<dbReference type="OMA" id="QMRPPLM"/>
<dbReference type="Proteomes" id="UP000001312">
    <property type="component" value="Unassembled WGS sequence"/>
</dbReference>
<dbReference type="GO" id="GO:0000243">
    <property type="term" value="C:commitment complex"/>
    <property type="evidence" value="ECO:0007669"/>
    <property type="project" value="UniProtKB-UniRule"/>
</dbReference>
<dbReference type="GO" id="GO:0005685">
    <property type="term" value="C:U1 snRNP"/>
    <property type="evidence" value="ECO:0000318"/>
    <property type="project" value="GO_Central"/>
</dbReference>
<dbReference type="GO" id="GO:0071004">
    <property type="term" value="C:U2-type prespliceosome"/>
    <property type="evidence" value="ECO:0007669"/>
    <property type="project" value="UniProtKB-UniRule"/>
</dbReference>
<dbReference type="GO" id="GO:0003729">
    <property type="term" value="F:mRNA binding"/>
    <property type="evidence" value="ECO:0007669"/>
    <property type="project" value="UniProtKB-UniRule"/>
</dbReference>
<dbReference type="GO" id="GO:0030627">
    <property type="term" value="F:pre-mRNA 5'-splice site binding"/>
    <property type="evidence" value="ECO:0000318"/>
    <property type="project" value="GO_Central"/>
</dbReference>
<dbReference type="GO" id="GO:0030619">
    <property type="term" value="F:U1 snRNA binding"/>
    <property type="evidence" value="ECO:0007669"/>
    <property type="project" value="UniProtKB-UniRule"/>
</dbReference>
<dbReference type="GO" id="GO:0008270">
    <property type="term" value="F:zinc ion binding"/>
    <property type="evidence" value="ECO:0007669"/>
    <property type="project" value="UniProtKB-UniRule"/>
</dbReference>
<dbReference type="GO" id="GO:0000395">
    <property type="term" value="P:mRNA 5'-splice site recognition"/>
    <property type="evidence" value="ECO:0000318"/>
    <property type="project" value="GO_Central"/>
</dbReference>
<dbReference type="GO" id="GO:0000387">
    <property type="term" value="P:spliceosomal snRNP assembly"/>
    <property type="evidence" value="ECO:0007669"/>
    <property type="project" value="UniProtKB-UniRule"/>
</dbReference>
<dbReference type="FunFam" id="3.30.160.60:FF:000059">
    <property type="entry name" value="U1 small nuclear ribonucleoprotein C"/>
    <property type="match status" value="1"/>
</dbReference>
<dbReference type="Gene3D" id="3.30.160.60">
    <property type="entry name" value="Classic Zinc Finger"/>
    <property type="match status" value="1"/>
</dbReference>
<dbReference type="HAMAP" id="MF_03153">
    <property type="entry name" value="U1_C"/>
    <property type="match status" value="1"/>
</dbReference>
<dbReference type="InterPro" id="IPR000690">
    <property type="entry name" value="Matrin/U1-C_Znf_C2H2"/>
</dbReference>
<dbReference type="InterPro" id="IPR003604">
    <property type="entry name" value="Matrin/U1-like-C_Znf_C2H2"/>
</dbReference>
<dbReference type="InterPro" id="IPR013085">
    <property type="entry name" value="U1-CZ_Znf_C2H2"/>
</dbReference>
<dbReference type="InterPro" id="IPR017340">
    <property type="entry name" value="U1_snRNP-C"/>
</dbReference>
<dbReference type="InterPro" id="IPR036236">
    <property type="entry name" value="Znf_C2H2_sf"/>
</dbReference>
<dbReference type="PANTHER" id="PTHR31148">
    <property type="entry name" value="U1 SMALL NUCLEAR RIBONUCLEOPROTEIN C"/>
    <property type="match status" value="1"/>
</dbReference>
<dbReference type="PANTHER" id="PTHR31148:SF1">
    <property type="entry name" value="U1 SMALL NUCLEAR RIBONUCLEOPROTEIN C"/>
    <property type="match status" value="1"/>
</dbReference>
<dbReference type="Pfam" id="PF06220">
    <property type="entry name" value="zf-U1"/>
    <property type="match status" value="1"/>
</dbReference>
<dbReference type="PIRSF" id="PIRSF037969">
    <property type="entry name" value="U1_snRNP-C"/>
    <property type="match status" value="1"/>
</dbReference>
<dbReference type="SMART" id="SM00451">
    <property type="entry name" value="ZnF_U1"/>
    <property type="match status" value="1"/>
</dbReference>
<dbReference type="SUPFAM" id="SSF57667">
    <property type="entry name" value="beta-beta-alpha zinc fingers"/>
    <property type="match status" value="1"/>
</dbReference>
<dbReference type="PROSITE" id="PS50171">
    <property type="entry name" value="ZF_MATRIN"/>
    <property type="match status" value="1"/>
</dbReference>
<gene>
    <name type="ORF">SS1G_10419</name>
</gene>
<evidence type="ECO:0000255" key="1">
    <source>
        <dbReference type="HAMAP-Rule" id="MF_03153"/>
    </source>
</evidence>
<evidence type="ECO:0000256" key="2">
    <source>
        <dbReference type="SAM" id="MobiDB-lite"/>
    </source>
</evidence>
<reference key="1">
    <citation type="journal article" date="2011" name="PLoS Genet.">
        <title>Genomic analysis of the necrotrophic fungal pathogens Sclerotinia sclerotiorum and Botrytis cinerea.</title>
        <authorList>
            <person name="Amselem J."/>
            <person name="Cuomo C.A."/>
            <person name="van Kan J.A.L."/>
            <person name="Viaud M."/>
            <person name="Benito E.P."/>
            <person name="Couloux A."/>
            <person name="Coutinho P.M."/>
            <person name="de Vries R.P."/>
            <person name="Dyer P.S."/>
            <person name="Fillinger S."/>
            <person name="Fournier E."/>
            <person name="Gout L."/>
            <person name="Hahn M."/>
            <person name="Kohn L."/>
            <person name="Lapalu N."/>
            <person name="Plummer K.M."/>
            <person name="Pradier J.-M."/>
            <person name="Quevillon E."/>
            <person name="Sharon A."/>
            <person name="Simon A."/>
            <person name="ten Have A."/>
            <person name="Tudzynski B."/>
            <person name="Tudzynski P."/>
            <person name="Wincker P."/>
            <person name="Andrew M."/>
            <person name="Anthouard V."/>
            <person name="Beever R.E."/>
            <person name="Beffa R."/>
            <person name="Benoit I."/>
            <person name="Bouzid O."/>
            <person name="Brault B."/>
            <person name="Chen Z."/>
            <person name="Choquer M."/>
            <person name="Collemare J."/>
            <person name="Cotton P."/>
            <person name="Danchin E.G."/>
            <person name="Da Silva C."/>
            <person name="Gautier A."/>
            <person name="Giraud C."/>
            <person name="Giraud T."/>
            <person name="Gonzalez C."/>
            <person name="Grossetete S."/>
            <person name="Gueldener U."/>
            <person name="Henrissat B."/>
            <person name="Howlett B.J."/>
            <person name="Kodira C."/>
            <person name="Kretschmer M."/>
            <person name="Lappartient A."/>
            <person name="Leroch M."/>
            <person name="Levis C."/>
            <person name="Mauceli E."/>
            <person name="Neuveglise C."/>
            <person name="Oeser B."/>
            <person name="Pearson M."/>
            <person name="Poulain J."/>
            <person name="Poussereau N."/>
            <person name="Quesneville H."/>
            <person name="Rascle C."/>
            <person name="Schumacher J."/>
            <person name="Segurens B."/>
            <person name="Sexton A."/>
            <person name="Silva E."/>
            <person name="Sirven C."/>
            <person name="Soanes D.M."/>
            <person name="Talbot N.J."/>
            <person name="Templeton M."/>
            <person name="Yandava C."/>
            <person name="Yarden O."/>
            <person name="Zeng Q."/>
            <person name="Rollins J.A."/>
            <person name="Lebrun M.-H."/>
            <person name="Dickman M."/>
        </authorList>
    </citation>
    <scope>NUCLEOTIDE SEQUENCE [LARGE SCALE GENOMIC DNA]</scope>
    <source>
        <strain>ATCC 18683 / 1980 / Ss-1</strain>
    </source>
</reference>
<feature type="chain" id="PRO_0000414294" description="U1 small nuclear ribonucleoprotein C">
    <location>
        <begin position="1"/>
        <end position="181"/>
    </location>
</feature>
<feature type="zinc finger region" description="Matrin-type" evidence="1">
    <location>
        <begin position="2"/>
        <end position="34"/>
    </location>
</feature>
<feature type="region of interest" description="Disordered" evidence="2">
    <location>
        <begin position="129"/>
        <end position="181"/>
    </location>
</feature>
<feature type="compositionally biased region" description="Pro residues" evidence="2">
    <location>
        <begin position="129"/>
        <end position="143"/>
    </location>
</feature>
<feature type="compositionally biased region" description="Pro residues" evidence="2">
    <location>
        <begin position="150"/>
        <end position="174"/>
    </location>
</feature>
<sequence>MPKCDYCDVYLTHDSMSVRKAHNSGRNHLRNVVDYYQQIGHEKAQSVIDSITSSYAAEGQSSSNPMLHNPAAATPFPPFPPANFPGGVPPPFPPASGPGGMPFPPPGARGFPMPPLPGQPGAPPMPPFPGMPAGMPFPPPGGLPPNFQFPIPPPGGFPGMPPPGQGFPGMPPPGGNHDERR</sequence>
<name>RU1C_SCLS1</name>
<protein>
    <recommendedName>
        <fullName evidence="1">U1 small nuclear ribonucleoprotein C</fullName>
        <shortName evidence="1">U1 snRNP C</shortName>
        <shortName evidence="1">U1-C</shortName>
        <shortName evidence="1">U1C</shortName>
    </recommendedName>
</protein>
<organism>
    <name type="scientific">Sclerotinia sclerotiorum (strain ATCC 18683 / 1980 / Ss-1)</name>
    <name type="common">White mold</name>
    <name type="synonym">Whetzelinia sclerotiorum</name>
    <dbReference type="NCBI Taxonomy" id="665079"/>
    <lineage>
        <taxon>Eukaryota</taxon>
        <taxon>Fungi</taxon>
        <taxon>Dikarya</taxon>
        <taxon>Ascomycota</taxon>
        <taxon>Pezizomycotina</taxon>
        <taxon>Leotiomycetes</taxon>
        <taxon>Helotiales</taxon>
        <taxon>Sclerotiniaceae</taxon>
        <taxon>Sclerotinia</taxon>
    </lineage>
</organism>
<proteinExistence type="inferred from homology"/>
<comment type="function">
    <text evidence="1">Component of the spliceosomal U1 snRNP, which is essential for recognition of the pre-mRNA 5' splice-site and the subsequent assembly of the spliceosome. U1-C is directly involved in initial 5' splice-site recognition for both constitutive and regulated alternative splicing. The interaction with the 5' splice-site seems to precede base-pairing between the pre-mRNA and the U1 snRNA. Stimulates commitment or early (E) complex formation by stabilizing the base pairing of the 5' end of the U1 snRNA and the 5' splice-site region.</text>
</comment>
<comment type="subunit">
    <text evidence="1">U1 snRNP is composed of the 7 core Sm proteins B/B', D1, D2, D3, E, F and G that assemble in a heptameric protein ring on the Sm site of the small nuclear RNA to form the core snRNP, and at least 3 U1 snRNP-specific proteins U1-70K, U1-A and U1-C. U1-C interacts with U1 snRNA and the 5' splice-site region of the pre-mRNA.</text>
</comment>
<comment type="subcellular location">
    <subcellularLocation>
        <location evidence="1">Nucleus</location>
    </subcellularLocation>
</comment>
<comment type="similarity">
    <text evidence="1">Belongs to the U1 small nuclear ribonucleoprotein C family.</text>
</comment>